<reference key="1">
    <citation type="submission" date="1995-05" db="EMBL/GenBank/DDBJ databases">
        <authorList>
            <person name="Fauconnier A."/>
            <person name="Allaoui A."/>
            <person name="van Elsen A."/>
            <person name="Cornelis G."/>
            <person name="Bollen A."/>
        </authorList>
    </citation>
    <scope>NUCLEOTIDE SEQUENCE [GENOMIC DNA]</scope>
    <source>
        <strain>W1024 / Serotype O:9</strain>
    </source>
</reference>
<evidence type="ECO:0000250" key="1"/>
<evidence type="ECO:0000305" key="2"/>
<proteinExistence type="inferred from homology"/>
<feature type="chain" id="PRO_0000180809" description="Flagellar basal-body rod protein FlgC">
    <location>
        <begin position="1"/>
        <end position="134"/>
    </location>
</feature>
<dbReference type="EMBL" id="Z48169">
    <property type="protein sequence ID" value="CAA88193.1"/>
    <property type="molecule type" value="Genomic_DNA"/>
</dbReference>
<dbReference type="PIR" id="S54220">
    <property type="entry name" value="S54220"/>
</dbReference>
<dbReference type="RefSeq" id="WP_005168794.1">
    <property type="nucleotide sequence ID" value="NZ_UHIX01000001.1"/>
</dbReference>
<dbReference type="SMR" id="Q56894"/>
<dbReference type="STRING" id="1443113.LC20_02157"/>
<dbReference type="eggNOG" id="COG1558">
    <property type="taxonomic scope" value="Bacteria"/>
</dbReference>
<dbReference type="OMA" id="YVAYPNI"/>
<dbReference type="GO" id="GO:0030694">
    <property type="term" value="C:bacterial-type flagellum basal body, rod"/>
    <property type="evidence" value="ECO:0007669"/>
    <property type="project" value="InterPro"/>
</dbReference>
<dbReference type="GO" id="GO:0071978">
    <property type="term" value="P:bacterial-type flagellum-dependent swarming motility"/>
    <property type="evidence" value="ECO:0007669"/>
    <property type="project" value="TreeGrafter"/>
</dbReference>
<dbReference type="InterPro" id="IPR001444">
    <property type="entry name" value="Flag_bb_rod_N"/>
</dbReference>
<dbReference type="InterPro" id="IPR019776">
    <property type="entry name" value="Flagellar_basal_body_rod_CS"/>
</dbReference>
<dbReference type="InterPro" id="IPR010930">
    <property type="entry name" value="Flg_bb/hook_C_dom"/>
</dbReference>
<dbReference type="InterPro" id="IPR006299">
    <property type="entry name" value="FlgC"/>
</dbReference>
<dbReference type="NCBIfam" id="TIGR01395">
    <property type="entry name" value="FlgC"/>
    <property type="match status" value="1"/>
</dbReference>
<dbReference type="PANTHER" id="PTHR30435:SF2">
    <property type="entry name" value="FLAGELLAR BASAL-BODY ROD PROTEIN FLGC"/>
    <property type="match status" value="1"/>
</dbReference>
<dbReference type="PANTHER" id="PTHR30435">
    <property type="entry name" value="FLAGELLAR PROTEIN"/>
    <property type="match status" value="1"/>
</dbReference>
<dbReference type="Pfam" id="PF00460">
    <property type="entry name" value="Flg_bb_rod"/>
    <property type="match status" value="1"/>
</dbReference>
<dbReference type="Pfam" id="PF06429">
    <property type="entry name" value="Flg_bbr_C"/>
    <property type="match status" value="1"/>
</dbReference>
<dbReference type="PROSITE" id="PS00588">
    <property type="entry name" value="FLAGELLA_BB_ROD"/>
    <property type="match status" value="1"/>
</dbReference>
<comment type="subunit">
    <text evidence="1">The basal body constitutes a major portion of the flagellar organelle and consists of four rings (L,P,S, and M) mounted on a central rod. The rod consists of about 26 subunits of FlgG in the distal portion, and FlgB, FlgC and FlgF are thought to build up the proximal portion of the rod with about 6 subunits each (By similarity).</text>
</comment>
<comment type="subcellular location">
    <subcellularLocation>
        <location evidence="1">Bacterial flagellum basal body</location>
    </subcellularLocation>
</comment>
<comment type="similarity">
    <text evidence="2">Belongs to the flagella basal body rod proteins family.</text>
</comment>
<organism>
    <name type="scientific">Yersinia enterocolitica</name>
    <dbReference type="NCBI Taxonomy" id="630"/>
    <lineage>
        <taxon>Bacteria</taxon>
        <taxon>Pseudomonadati</taxon>
        <taxon>Pseudomonadota</taxon>
        <taxon>Gammaproteobacteria</taxon>
        <taxon>Enterobacterales</taxon>
        <taxon>Yersiniaceae</taxon>
        <taxon>Yersinia</taxon>
    </lineage>
</organism>
<gene>
    <name type="primary">flgC</name>
</gene>
<keyword id="KW-0975">Bacterial flagellum</keyword>
<accession>Q56894</accession>
<protein>
    <recommendedName>
        <fullName>Flagellar basal-body rod protein FlgC</fullName>
    </recommendedName>
</protein>
<sequence length="134" mass="14178">MSLLNIFDIAGSALSAQSQRLNVSASNMANADSVTGPDGQPYRAKQVVFQVAAQPGQETGGVRVAQIIDDPAPDRLVFQPGNPLADAKGYVRMPNVDVTGEMVNTISASRSYQANVEVLNTTKSLMLKTLTLGQ</sequence>
<name>FLGC_YEREN</name>